<protein>
    <recommendedName>
        <fullName evidence="1">Large ribosomal subunit protein bL25</fullName>
    </recommendedName>
    <alternativeName>
        <fullName evidence="3">50S ribosomal protein L25</fullName>
    </alternativeName>
    <alternativeName>
        <fullName evidence="1">General stress protein CTC</fullName>
    </alternativeName>
</protein>
<gene>
    <name evidence="1" type="primary">rplY</name>
    <name evidence="1" type="synonym">ctc</name>
    <name type="ordered locus">Moth_0078</name>
</gene>
<proteinExistence type="inferred from homology"/>
<feature type="chain" id="PRO_0000244216" description="Large ribosomal subunit protein bL25">
    <location>
        <begin position="1"/>
        <end position="208"/>
    </location>
</feature>
<feature type="region of interest" description="Disordered" evidence="2">
    <location>
        <begin position="188"/>
        <end position="208"/>
    </location>
</feature>
<name>RL25_MOOTA</name>
<dbReference type="EMBL" id="CP000232">
    <property type="protein sequence ID" value="ABC18417.1"/>
    <property type="molecule type" value="Genomic_DNA"/>
</dbReference>
<dbReference type="RefSeq" id="YP_428960.1">
    <property type="nucleotide sequence ID" value="NC_007644.1"/>
</dbReference>
<dbReference type="SMR" id="Q2RMC2"/>
<dbReference type="STRING" id="264732.Moth_0078"/>
<dbReference type="EnsemblBacteria" id="ABC18417">
    <property type="protein sequence ID" value="ABC18417"/>
    <property type="gene ID" value="Moth_0078"/>
</dbReference>
<dbReference type="KEGG" id="mta:Moth_0078"/>
<dbReference type="PATRIC" id="fig|264732.11.peg.83"/>
<dbReference type="eggNOG" id="COG1825">
    <property type="taxonomic scope" value="Bacteria"/>
</dbReference>
<dbReference type="HOGENOM" id="CLU_075939_2_0_9"/>
<dbReference type="OrthoDB" id="9790002at2"/>
<dbReference type="GO" id="GO:0022625">
    <property type="term" value="C:cytosolic large ribosomal subunit"/>
    <property type="evidence" value="ECO:0007669"/>
    <property type="project" value="TreeGrafter"/>
</dbReference>
<dbReference type="GO" id="GO:0008097">
    <property type="term" value="F:5S rRNA binding"/>
    <property type="evidence" value="ECO:0007669"/>
    <property type="project" value="InterPro"/>
</dbReference>
<dbReference type="GO" id="GO:0003735">
    <property type="term" value="F:structural constituent of ribosome"/>
    <property type="evidence" value="ECO:0007669"/>
    <property type="project" value="InterPro"/>
</dbReference>
<dbReference type="GO" id="GO:0006412">
    <property type="term" value="P:translation"/>
    <property type="evidence" value="ECO:0007669"/>
    <property type="project" value="UniProtKB-UniRule"/>
</dbReference>
<dbReference type="CDD" id="cd00495">
    <property type="entry name" value="Ribosomal_L25_TL5_CTC"/>
    <property type="match status" value="1"/>
</dbReference>
<dbReference type="Gene3D" id="2.170.120.20">
    <property type="entry name" value="Ribosomal protein L25, beta domain"/>
    <property type="match status" value="1"/>
</dbReference>
<dbReference type="Gene3D" id="2.40.240.10">
    <property type="entry name" value="Ribosomal Protein L25, Chain P"/>
    <property type="match status" value="1"/>
</dbReference>
<dbReference type="HAMAP" id="MF_01334">
    <property type="entry name" value="Ribosomal_bL25_CTC"/>
    <property type="match status" value="1"/>
</dbReference>
<dbReference type="InterPro" id="IPR020056">
    <property type="entry name" value="Rbsml_bL25/Gln-tRNA_synth_N"/>
</dbReference>
<dbReference type="InterPro" id="IPR011035">
    <property type="entry name" value="Ribosomal_bL25/Gln-tRNA_synth"/>
</dbReference>
<dbReference type="InterPro" id="IPR020057">
    <property type="entry name" value="Ribosomal_bL25_b-dom"/>
</dbReference>
<dbReference type="InterPro" id="IPR037121">
    <property type="entry name" value="Ribosomal_bL25_C"/>
</dbReference>
<dbReference type="InterPro" id="IPR001021">
    <property type="entry name" value="Ribosomal_bL25_long"/>
</dbReference>
<dbReference type="InterPro" id="IPR029751">
    <property type="entry name" value="Ribosomal_L25_dom"/>
</dbReference>
<dbReference type="InterPro" id="IPR020930">
    <property type="entry name" value="Ribosomal_uL5_bac-type"/>
</dbReference>
<dbReference type="NCBIfam" id="TIGR00731">
    <property type="entry name" value="bL25_bact_ctc"/>
    <property type="match status" value="1"/>
</dbReference>
<dbReference type="NCBIfam" id="NF004133">
    <property type="entry name" value="PRK05618.2-4"/>
    <property type="match status" value="1"/>
</dbReference>
<dbReference type="NCBIfam" id="NF004139">
    <property type="entry name" value="PRK05618.4-2"/>
    <property type="match status" value="1"/>
</dbReference>
<dbReference type="NCBIfam" id="NF004612">
    <property type="entry name" value="PRK05943.1"/>
    <property type="match status" value="1"/>
</dbReference>
<dbReference type="PANTHER" id="PTHR33284">
    <property type="entry name" value="RIBOSOMAL PROTEIN L25/GLN-TRNA SYNTHETASE, ANTI-CODON-BINDING DOMAIN-CONTAINING PROTEIN"/>
    <property type="match status" value="1"/>
</dbReference>
<dbReference type="PANTHER" id="PTHR33284:SF1">
    <property type="entry name" value="RIBOSOMAL PROTEIN L25_GLN-TRNA SYNTHETASE, ANTI-CODON-BINDING DOMAIN-CONTAINING PROTEIN"/>
    <property type="match status" value="1"/>
</dbReference>
<dbReference type="Pfam" id="PF01386">
    <property type="entry name" value="Ribosomal_L25p"/>
    <property type="match status" value="1"/>
</dbReference>
<dbReference type="Pfam" id="PF14693">
    <property type="entry name" value="Ribosomal_TL5_C"/>
    <property type="match status" value="1"/>
</dbReference>
<dbReference type="SUPFAM" id="SSF50715">
    <property type="entry name" value="Ribosomal protein L25-like"/>
    <property type="match status" value="1"/>
</dbReference>
<keyword id="KW-0687">Ribonucleoprotein</keyword>
<keyword id="KW-0689">Ribosomal protein</keyword>
<keyword id="KW-0694">RNA-binding</keyword>
<keyword id="KW-0699">rRNA-binding</keyword>
<sequence length="208" mass="22553">MQAQTLEVTMRPEVGKQAARRLRRQGKLPGIIYGKKIANLAVIIPARQLEHILATEGENALLKLVVSGDGQNKEFTAVIREVQRHPLKGNLTHVDFYQVSMEDKLRATVPVILEGEARGVKEGGILQHGVREIEIESLPADLPESIVVDVSHLGVGEHLTVGEIKVPAGVKILSEPDTVIATVVTTRAVETETEEETTTGESPAQPAE</sequence>
<organism>
    <name type="scientific">Moorella thermoacetica (strain ATCC 39073 / JCM 9320)</name>
    <dbReference type="NCBI Taxonomy" id="264732"/>
    <lineage>
        <taxon>Bacteria</taxon>
        <taxon>Bacillati</taxon>
        <taxon>Bacillota</taxon>
        <taxon>Clostridia</taxon>
        <taxon>Moorellales</taxon>
        <taxon>Moorellaceae</taxon>
        <taxon>Moorella</taxon>
    </lineage>
</organism>
<accession>Q2RMC2</accession>
<comment type="function">
    <text evidence="1">This is one of the proteins that binds to the 5S RNA in the ribosome where it forms part of the central protuberance.</text>
</comment>
<comment type="subunit">
    <text evidence="1">Part of the 50S ribosomal subunit; part of the 5S rRNA/L5/L18/L25 subcomplex. Contacts the 5S rRNA. Binds to the 5S rRNA independently of L5 and L18.</text>
</comment>
<comment type="similarity">
    <text evidence="1">Belongs to the bacterial ribosomal protein bL25 family. CTC subfamily.</text>
</comment>
<evidence type="ECO:0000255" key="1">
    <source>
        <dbReference type="HAMAP-Rule" id="MF_01334"/>
    </source>
</evidence>
<evidence type="ECO:0000256" key="2">
    <source>
        <dbReference type="SAM" id="MobiDB-lite"/>
    </source>
</evidence>
<evidence type="ECO:0000305" key="3"/>
<reference key="1">
    <citation type="journal article" date="2008" name="Environ. Microbiol.">
        <title>The complete genome sequence of Moorella thermoacetica (f. Clostridium thermoaceticum).</title>
        <authorList>
            <person name="Pierce E."/>
            <person name="Xie G."/>
            <person name="Barabote R.D."/>
            <person name="Saunders E."/>
            <person name="Han C.S."/>
            <person name="Detter J.C."/>
            <person name="Richardson P."/>
            <person name="Brettin T.S."/>
            <person name="Das A."/>
            <person name="Ljungdahl L.G."/>
            <person name="Ragsdale S.W."/>
        </authorList>
    </citation>
    <scope>NUCLEOTIDE SEQUENCE [LARGE SCALE GENOMIC DNA]</scope>
    <source>
        <strain>ATCC 39073 / JCM 9320</strain>
    </source>
</reference>